<organism>
    <name type="scientific">Candida albicans (strain SC5314 / ATCC MYA-2876)</name>
    <name type="common">Yeast</name>
    <dbReference type="NCBI Taxonomy" id="237561"/>
    <lineage>
        <taxon>Eukaryota</taxon>
        <taxon>Fungi</taxon>
        <taxon>Dikarya</taxon>
        <taxon>Ascomycota</taxon>
        <taxon>Saccharomycotina</taxon>
        <taxon>Pichiomycetes</taxon>
        <taxon>Debaryomycetaceae</taxon>
        <taxon>Candida/Lodderomyces clade</taxon>
        <taxon>Candida</taxon>
    </lineage>
</organism>
<proteinExistence type="evidence at protein level"/>
<comment type="function">
    <text evidence="5 6 7">Transcription factor that binds ribosomal protein gene promoters and rDNA locus with TBF1. Necessary for the expression of genes involved in assimilation of inorganic sulfate. Also required for the expression of respiratory genes and glycolytic genes. Does not bind to centromeres and is not necessary for efficient chromosome segregationas as does S.cerevisiae CBF1.</text>
</comment>
<comment type="subcellular location">
    <subcellularLocation>
        <location evidence="1">Nucleus</location>
    </subcellularLocation>
</comment>
<comment type="induction">
    <text evidence="8">Repressed during biofilm formation.</text>
</comment>
<comment type="disruption phenotype">
    <text evidence="6">Leads to auxotrophy for sulfur amino acids.</text>
</comment>
<dbReference type="EMBL" id="CP017626">
    <property type="protein sequence ID" value="AOW29381.1"/>
    <property type="molecule type" value="Genomic_DNA"/>
</dbReference>
<dbReference type="RefSeq" id="XP_019330942.1">
    <property type="nucleotide sequence ID" value="XM_019475397.1"/>
</dbReference>
<dbReference type="SMR" id="Q5A1E3"/>
<dbReference type="BioGRID" id="1225818">
    <property type="interactions" value="1"/>
</dbReference>
<dbReference type="FunCoup" id="Q5A1E3">
    <property type="interactions" value="3291"/>
</dbReference>
<dbReference type="STRING" id="237561.Q5A1E3"/>
<dbReference type="EnsemblFungi" id="C4_06580W_A-T">
    <property type="protein sequence ID" value="C4_06580W_A-T-p1"/>
    <property type="gene ID" value="C4_06580W_A"/>
</dbReference>
<dbReference type="GeneID" id="3642779"/>
<dbReference type="KEGG" id="cal:CAALFM_C406580WA"/>
<dbReference type="CGD" id="CAL0000186329">
    <property type="gene designation" value="CBF1"/>
</dbReference>
<dbReference type="VEuPathDB" id="FungiDB:C4_06580W_A"/>
<dbReference type="eggNOG" id="KOG1318">
    <property type="taxonomic scope" value="Eukaryota"/>
</dbReference>
<dbReference type="HOGENOM" id="CLU_046871_2_0_1"/>
<dbReference type="InParanoid" id="Q5A1E3"/>
<dbReference type="OMA" id="KPPHGSE"/>
<dbReference type="OrthoDB" id="71302at2759"/>
<dbReference type="PRO" id="PR:Q5A1E3"/>
<dbReference type="Proteomes" id="UP000000559">
    <property type="component" value="Chromosome 4"/>
</dbReference>
<dbReference type="GO" id="GO:0005634">
    <property type="term" value="C:nucleus"/>
    <property type="evidence" value="ECO:0000318"/>
    <property type="project" value="GO_Central"/>
</dbReference>
<dbReference type="GO" id="GO:0003700">
    <property type="term" value="F:DNA-binding transcription factor activity"/>
    <property type="evidence" value="ECO:0000316"/>
    <property type="project" value="CGD"/>
</dbReference>
<dbReference type="GO" id="GO:0046983">
    <property type="term" value="F:protein dimerization activity"/>
    <property type="evidence" value="ECO:0007669"/>
    <property type="project" value="InterPro"/>
</dbReference>
<dbReference type="GO" id="GO:0043565">
    <property type="term" value="F:sequence-specific DNA binding"/>
    <property type="evidence" value="ECO:0000314"/>
    <property type="project" value="CGD"/>
</dbReference>
<dbReference type="GO" id="GO:0007059">
    <property type="term" value="P:chromosome segregation"/>
    <property type="evidence" value="ECO:0000316"/>
    <property type="project" value="CGD"/>
</dbReference>
<dbReference type="GO" id="GO:0009086">
    <property type="term" value="P:methionine biosynthetic process"/>
    <property type="evidence" value="ECO:0000316"/>
    <property type="project" value="CGD"/>
</dbReference>
<dbReference type="GO" id="GO:0009303">
    <property type="term" value="P:rRNA transcription"/>
    <property type="evidence" value="ECO:0000315"/>
    <property type="project" value="CGD"/>
</dbReference>
<dbReference type="GO" id="GO:0044010">
    <property type="term" value="P:single-species biofilm formation"/>
    <property type="evidence" value="ECO:0000315"/>
    <property type="project" value="CGD"/>
</dbReference>
<dbReference type="GO" id="GO:0000103">
    <property type="term" value="P:sulfate assimilation"/>
    <property type="evidence" value="ECO:0000315"/>
    <property type="project" value="CGD"/>
</dbReference>
<dbReference type="CDD" id="cd11398">
    <property type="entry name" value="bHLHzip_scCBP1"/>
    <property type="match status" value="1"/>
</dbReference>
<dbReference type="Gene3D" id="4.10.280.10">
    <property type="entry name" value="Helix-loop-helix DNA-binding domain"/>
    <property type="match status" value="1"/>
</dbReference>
<dbReference type="InterPro" id="IPR011598">
    <property type="entry name" value="bHLH_dom"/>
</dbReference>
<dbReference type="InterPro" id="IPR047206">
    <property type="entry name" value="bHLHzip_scCBP1-like"/>
</dbReference>
<dbReference type="InterPro" id="IPR036638">
    <property type="entry name" value="HLH_DNA-bd_sf"/>
</dbReference>
<dbReference type="PANTHER" id="PTHR47787">
    <property type="entry name" value="CENTROMERE-BINDING PROTEIN 1"/>
    <property type="match status" value="1"/>
</dbReference>
<dbReference type="PANTHER" id="PTHR47787:SF1">
    <property type="entry name" value="CENTROMERE-BINDING PROTEIN 1"/>
    <property type="match status" value="1"/>
</dbReference>
<dbReference type="Pfam" id="PF00010">
    <property type="entry name" value="HLH"/>
    <property type="match status" value="1"/>
</dbReference>
<dbReference type="SMART" id="SM00353">
    <property type="entry name" value="HLH"/>
    <property type="match status" value="1"/>
</dbReference>
<dbReference type="SUPFAM" id="SSF47459">
    <property type="entry name" value="HLH, helix-loop-helix DNA-binding domain"/>
    <property type="match status" value="1"/>
</dbReference>
<dbReference type="PROSITE" id="PS50888">
    <property type="entry name" value="BHLH"/>
    <property type="match status" value="1"/>
</dbReference>
<feature type="chain" id="PRO_0000426067" description="Transcriptional regulator CBF1">
    <location>
        <begin position="1"/>
        <end position="251"/>
    </location>
</feature>
<feature type="domain" description="bHLH" evidence="3">
    <location>
        <begin position="152"/>
        <end position="200"/>
    </location>
</feature>
<feature type="region of interest" description="Disordered" evidence="4">
    <location>
        <begin position="1"/>
        <end position="169"/>
    </location>
</feature>
<feature type="coiled-coil region" evidence="2">
    <location>
        <begin position="190"/>
        <end position="223"/>
    </location>
</feature>
<feature type="compositionally biased region" description="Basic and acidic residues" evidence="4">
    <location>
        <begin position="7"/>
        <end position="28"/>
    </location>
</feature>
<feature type="compositionally biased region" description="Low complexity" evidence="4">
    <location>
        <begin position="40"/>
        <end position="56"/>
    </location>
</feature>
<feature type="compositionally biased region" description="Polar residues" evidence="4">
    <location>
        <begin position="67"/>
        <end position="76"/>
    </location>
</feature>
<feature type="compositionally biased region" description="Basic and acidic residues" evidence="4">
    <location>
        <begin position="77"/>
        <end position="105"/>
    </location>
</feature>
<feature type="compositionally biased region" description="Polar residues" evidence="4">
    <location>
        <begin position="107"/>
        <end position="116"/>
    </location>
</feature>
<feature type="compositionally biased region" description="Low complexity" evidence="4">
    <location>
        <begin position="117"/>
        <end position="126"/>
    </location>
</feature>
<feature type="compositionally biased region" description="Polar residues" evidence="4">
    <location>
        <begin position="127"/>
        <end position="140"/>
    </location>
</feature>
<feature type="compositionally biased region" description="Basic and acidic residues" evidence="4">
    <location>
        <begin position="144"/>
        <end position="167"/>
    </location>
</feature>
<keyword id="KW-0175">Coiled coil</keyword>
<keyword id="KW-0238">DNA-binding</keyword>
<keyword id="KW-0539">Nucleus</keyword>
<keyword id="KW-1185">Reference proteome</keyword>
<keyword id="KW-0804">Transcription</keyword>
<keyword id="KW-0805">Transcription regulation</keyword>
<evidence type="ECO:0000250" key="1">
    <source>
        <dbReference type="UniProtKB" id="P17106"/>
    </source>
</evidence>
<evidence type="ECO:0000255" key="2"/>
<evidence type="ECO:0000255" key="3">
    <source>
        <dbReference type="PROSITE-ProRule" id="PRU00981"/>
    </source>
</evidence>
<evidence type="ECO:0000256" key="4">
    <source>
        <dbReference type="SAM" id="MobiDB-lite"/>
    </source>
</evidence>
<evidence type="ECO:0000269" key="5">
    <source>
    </source>
</evidence>
<evidence type="ECO:0000269" key="6">
    <source>
    </source>
</evidence>
<evidence type="ECO:0000269" key="7">
    <source>
    </source>
</evidence>
<evidence type="ECO:0000269" key="8">
    <source>
    </source>
</evidence>
<reference key="1">
    <citation type="journal article" date="2004" name="Proc. Natl. Acad. Sci. U.S.A.">
        <title>The diploid genome sequence of Candida albicans.</title>
        <authorList>
            <person name="Jones T."/>
            <person name="Federspiel N.A."/>
            <person name="Chibana H."/>
            <person name="Dungan J."/>
            <person name="Kalman S."/>
            <person name="Magee B.B."/>
            <person name="Newport G."/>
            <person name="Thorstenson Y.R."/>
            <person name="Agabian N."/>
            <person name="Magee P.T."/>
            <person name="Davis R.W."/>
            <person name="Scherer S."/>
        </authorList>
    </citation>
    <scope>NUCLEOTIDE SEQUENCE [LARGE SCALE GENOMIC DNA]</scope>
    <source>
        <strain>SC5314 / ATCC MYA-2876</strain>
    </source>
</reference>
<reference key="2">
    <citation type="journal article" date="2007" name="Genome Biol.">
        <title>Assembly of the Candida albicans genome into sixteen supercontigs aligned on the eight chromosomes.</title>
        <authorList>
            <person name="van het Hoog M."/>
            <person name="Rast T.J."/>
            <person name="Martchenko M."/>
            <person name="Grindle S."/>
            <person name="Dignard D."/>
            <person name="Hogues H."/>
            <person name="Cuomo C."/>
            <person name="Berriman M."/>
            <person name="Scherer S."/>
            <person name="Magee B.B."/>
            <person name="Whiteway M."/>
            <person name="Chibana H."/>
            <person name="Nantel A."/>
            <person name="Magee P.T."/>
        </authorList>
    </citation>
    <scope>GENOME REANNOTATION</scope>
    <source>
        <strain>SC5314 / ATCC MYA-2876</strain>
    </source>
</reference>
<reference key="3">
    <citation type="journal article" date="2013" name="Genome Biol.">
        <title>Assembly of a phased diploid Candida albicans genome facilitates allele-specific measurements and provides a simple model for repeat and indel structure.</title>
        <authorList>
            <person name="Muzzey D."/>
            <person name="Schwartz K."/>
            <person name="Weissman J.S."/>
            <person name="Sherlock G."/>
        </authorList>
    </citation>
    <scope>NUCLEOTIDE SEQUENCE [LARGE SCALE GENOMIC DNA]</scope>
    <scope>GENOME REANNOTATION</scope>
    <source>
        <strain>SC5314 / ATCC MYA-2876</strain>
    </source>
</reference>
<reference key="4">
    <citation type="journal article" date="2001" name="Yeast">
        <title>The centromere-binding factor Cbf1p from Candida albicans complements the methionine auxotrophic phenotype of Saccharomyces cerevisiae.</title>
        <authorList>
            <person name="Eck R."/>
            <person name="Stoyan T."/>
            <person name="Kunkel W."/>
        </authorList>
    </citation>
    <scope>IDENTIFICATION</scope>
    <scope>FUNCTION</scope>
</reference>
<reference key="5">
    <citation type="journal article" date="2003" name="Gene">
        <title>Functional characterization of CaCBF1, the Candida albicans homolog of centromere binding factor 1.</title>
        <authorList>
            <person name="Biswas K."/>
            <person name="Rieger K.J."/>
            <person name="Morschhauser J."/>
        </authorList>
    </citation>
    <scope>FUNCTION</scope>
    <scope>DISRUPTION PHENOTYPE</scope>
</reference>
<reference key="6">
    <citation type="journal article" date="2008" name="Mol. Cell">
        <title>Transcription factor substitution during the evolution of fungal ribosome regulation.</title>
        <authorList>
            <person name="Hogues H."/>
            <person name="Lavoie H."/>
            <person name="Sellam A."/>
            <person name="Mangos M."/>
            <person name="Roemer T."/>
            <person name="Purisima E."/>
            <person name="Nantel A."/>
            <person name="Whiteway M."/>
        </authorList>
    </citation>
    <scope>FUNCTION</scope>
    <scope>DNA-BINDING</scope>
</reference>
<reference key="7">
    <citation type="journal article" date="2012" name="Cell">
        <title>A recently evolved transcriptional network controls biofilm development in Candida albicans.</title>
        <authorList>
            <person name="Nobile C.J."/>
            <person name="Fox E.P."/>
            <person name="Nett J.E."/>
            <person name="Sorrells T.R."/>
            <person name="Mitrovich Q.M."/>
            <person name="Hernday A.D."/>
            <person name="Tuch B.B."/>
            <person name="Andes D.R."/>
            <person name="Johnson A.D."/>
        </authorList>
    </citation>
    <scope>INDUCTION</scope>
</reference>
<accession>Q5A1E3</accession>
<accession>A0A1D8PML4</accession>
<gene>
    <name type="primary">CBF1</name>
    <name type="ordered locus">CAALFM_C406580WA</name>
    <name type="ORF">CaO19.10394</name>
    <name type="ORF">CaO19.2876</name>
</gene>
<name>CBF1_CANAL</name>
<protein>
    <recommendedName>
        <fullName>Transcriptional regulator CBF1</fullName>
    </recommendedName>
</protein>
<sequence length="251" mass="29153">MVKSHKRTLEKDEEHQEKKKANKISKDDMEIDAELLTQQASDSAHTDTATAAVAAVNNEQGKELEQTESSTNQTSALDKDDKETKDNLNPREETQSSHQEIDIPKDQLTNQQNLADQHQQYQYHQQLAQTNFKTEPTNSAKPPHGSEEWHRQRRENHKEVERKRRESINTGIRELARLIPTTDTNKAQILQRAVEYIKRLKENENNNIEKWTLEKLLTEQAVSELSASNEKLKHELESAYREIEQLKRGKK</sequence>